<name>UDG_RICFE</name>
<keyword id="KW-0520">NAD</keyword>
<keyword id="KW-0560">Oxidoreductase</keyword>
<proteinExistence type="inferred from homology"/>
<accession>Q4UK39</accession>
<feature type="chain" id="PRO_0000281045" description="UDP-glucose 6-dehydrogenase">
    <location>
        <begin position="1"/>
        <end position="448"/>
    </location>
</feature>
<feature type="active site" description="Nucleophile" evidence="1">
    <location>
        <position position="260"/>
    </location>
</feature>
<feature type="binding site" evidence="2">
    <location>
        <begin position="2"/>
        <end position="19"/>
    </location>
    <ligand>
        <name>NAD(+)</name>
        <dbReference type="ChEBI" id="CHEBI:57540"/>
    </ligand>
</feature>
<feature type="binding site" evidence="1">
    <location>
        <position position="11"/>
    </location>
    <ligand>
        <name>NAD(+)</name>
        <dbReference type="ChEBI" id="CHEBI:57540"/>
    </ligand>
</feature>
<feature type="binding site" evidence="1">
    <location>
        <position position="30"/>
    </location>
    <ligand>
        <name>NAD(+)</name>
        <dbReference type="ChEBI" id="CHEBI:57540"/>
    </ligand>
</feature>
<feature type="binding site" evidence="1">
    <location>
        <position position="35"/>
    </location>
    <ligand>
        <name>NAD(+)</name>
        <dbReference type="ChEBI" id="CHEBI:57540"/>
    </ligand>
</feature>
<feature type="binding site" evidence="1">
    <location>
        <position position="121"/>
    </location>
    <ligand>
        <name>NAD(+)</name>
        <dbReference type="ChEBI" id="CHEBI:57540"/>
    </ligand>
</feature>
<feature type="binding site" evidence="1">
    <location>
        <begin position="148"/>
        <end position="152"/>
    </location>
    <ligand>
        <name>substrate</name>
    </ligand>
</feature>
<feature type="binding site" evidence="1">
    <location>
        <position position="152"/>
    </location>
    <ligand>
        <name>NAD(+)</name>
        <dbReference type="ChEBI" id="CHEBI:57540"/>
    </ligand>
</feature>
<feature type="binding site" evidence="1">
    <location>
        <position position="204"/>
    </location>
    <ligand>
        <name>substrate</name>
    </ligand>
</feature>
<feature type="binding site" evidence="1">
    <location>
        <position position="208"/>
    </location>
    <ligand>
        <name>substrate</name>
    </ligand>
</feature>
<feature type="binding site" evidence="1">
    <location>
        <begin position="249"/>
        <end position="253"/>
    </location>
    <ligand>
        <name>substrate</name>
    </ligand>
</feature>
<feature type="binding site" evidence="1">
    <location>
        <position position="257"/>
    </location>
    <ligand>
        <name>substrate</name>
    </ligand>
</feature>
<feature type="binding site" evidence="1">
    <location>
        <position position="263"/>
    </location>
    <ligand>
        <name>NAD(+)</name>
        <dbReference type="ChEBI" id="CHEBI:57540"/>
    </ligand>
</feature>
<feature type="binding site" evidence="1">
    <location>
        <position position="321"/>
    </location>
    <ligand>
        <name>substrate</name>
    </ligand>
</feature>
<feature type="binding site" evidence="1">
    <location>
        <position position="328"/>
    </location>
    <ligand>
        <name>NAD(+)</name>
        <dbReference type="ChEBI" id="CHEBI:57540"/>
    </ligand>
</feature>
<evidence type="ECO:0000250" key="1">
    <source>
        <dbReference type="UniProtKB" id="Q0P8H3"/>
    </source>
</evidence>
<evidence type="ECO:0000255" key="2"/>
<evidence type="ECO:0000305" key="3"/>
<gene>
    <name type="primary">udg</name>
    <name type="ordered locus">RF_1245</name>
</gene>
<organism>
    <name type="scientific">Rickettsia felis (strain ATCC VR-1525 / URRWXCal2)</name>
    <name type="common">Rickettsia azadi</name>
    <dbReference type="NCBI Taxonomy" id="315456"/>
    <lineage>
        <taxon>Bacteria</taxon>
        <taxon>Pseudomonadati</taxon>
        <taxon>Pseudomonadota</taxon>
        <taxon>Alphaproteobacteria</taxon>
        <taxon>Rickettsiales</taxon>
        <taxon>Rickettsiaceae</taxon>
        <taxon>Rickettsieae</taxon>
        <taxon>Rickettsia</taxon>
        <taxon>spotted fever group</taxon>
    </lineage>
</organism>
<reference key="1">
    <citation type="journal article" date="2005" name="PLoS Biol.">
        <title>The genome sequence of Rickettsia felis identifies the first putative conjugative plasmid in an obligate intracellular parasite.</title>
        <authorList>
            <person name="Ogata H."/>
            <person name="Renesto P."/>
            <person name="Audic S."/>
            <person name="Robert C."/>
            <person name="Blanc G."/>
            <person name="Fournier P.-E."/>
            <person name="Parinello H."/>
            <person name="Claverie J.-M."/>
            <person name="Raoult D."/>
        </authorList>
    </citation>
    <scope>NUCLEOTIDE SEQUENCE [LARGE SCALE GENOMIC DNA]</scope>
    <source>
        <strain>ATCC VR-1525 / URRWXCal2</strain>
    </source>
</reference>
<protein>
    <recommendedName>
        <fullName>UDP-glucose 6-dehydrogenase</fullName>
        <shortName>UDP-Glc dehydrogenase</shortName>
        <shortName>UDP-GlcDH</shortName>
        <shortName>UDPGDH</shortName>
        <ecNumber>1.1.1.22</ecNumber>
    </recommendedName>
</protein>
<comment type="catalytic activity">
    <reaction>
        <text>UDP-alpha-D-glucose + 2 NAD(+) + H2O = UDP-alpha-D-glucuronate + 2 NADH + 3 H(+)</text>
        <dbReference type="Rhea" id="RHEA:23596"/>
        <dbReference type="ChEBI" id="CHEBI:15377"/>
        <dbReference type="ChEBI" id="CHEBI:15378"/>
        <dbReference type="ChEBI" id="CHEBI:57540"/>
        <dbReference type="ChEBI" id="CHEBI:57945"/>
        <dbReference type="ChEBI" id="CHEBI:58052"/>
        <dbReference type="ChEBI" id="CHEBI:58885"/>
        <dbReference type="EC" id="1.1.1.22"/>
    </reaction>
</comment>
<comment type="pathway">
    <text>Nucleotide-sugar biosynthesis; UDP-alpha-D-glucuronate biosynthesis; UDP-alpha-D-glucuronate from UDP-alpha-D-glucose: step 1/1.</text>
</comment>
<comment type="similarity">
    <text evidence="3">Belongs to the UDP-glucose/GDP-mannose dehydrogenase family.</text>
</comment>
<dbReference type="EC" id="1.1.1.22"/>
<dbReference type="EMBL" id="CP000053">
    <property type="protein sequence ID" value="AAY62096.1"/>
    <property type="molecule type" value="Genomic_DNA"/>
</dbReference>
<dbReference type="SMR" id="Q4UK39"/>
<dbReference type="STRING" id="315456.RF_1245"/>
<dbReference type="KEGG" id="rfe:RF_1245"/>
<dbReference type="eggNOG" id="COG1004">
    <property type="taxonomic scope" value="Bacteria"/>
</dbReference>
<dbReference type="HOGENOM" id="CLU_023810_1_2_5"/>
<dbReference type="OrthoDB" id="9803238at2"/>
<dbReference type="UniPathway" id="UPA00038">
    <property type="reaction ID" value="UER00491"/>
</dbReference>
<dbReference type="Proteomes" id="UP000008548">
    <property type="component" value="Chromosome"/>
</dbReference>
<dbReference type="GO" id="GO:0051287">
    <property type="term" value="F:NAD binding"/>
    <property type="evidence" value="ECO:0000250"/>
    <property type="project" value="UniProtKB"/>
</dbReference>
<dbReference type="GO" id="GO:0003979">
    <property type="term" value="F:UDP-glucose 6-dehydrogenase activity"/>
    <property type="evidence" value="ECO:0000250"/>
    <property type="project" value="UniProtKB"/>
</dbReference>
<dbReference type="GO" id="GO:0000271">
    <property type="term" value="P:polysaccharide biosynthetic process"/>
    <property type="evidence" value="ECO:0007669"/>
    <property type="project" value="InterPro"/>
</dbReference>
<dbReference type="GO" id="GO:0006065">
    <property type="term" value="P:UDP-glucuronate biosynthetic process"/>
    <property type="evidence" value="ECO:0007669"/>
    <property type="project" value="UniProtKB-UniPathway"/>
</dbReference>
<dbReference type="Gene3D" id="1.20.5.100">
    <property type="entry name" value="Cytochrome c1, transmembrane anchor, C-terminal"/>
    <property type="match status" value="1"/>
</dbReference>
<dbReference type="Gene3D" id="3.40.50.720">
    <property type="entry name" value="NAD(P)-binding Rossmann-like Domain"/>
    <property type="match status" value="2"/>
</dbReference>
<dbReference type="InterPro" id="IPR008927">
    <property type="entry name" value="6-PGluconate_DH-like_C_sf"/>
</dbReference>
<dbReference type="InterPro" id="IPR036291">
    <property type="entry name" value="NAD(P)-bd_dom_sf"/>
</dbReference>
<dbReference type="InterPro" id="IPR017476">
    <property type="entry name" value="UDP-Glc/GDP-Man"/>
</dbReference>
<dbReference type="InterPro" id="IPR014027">
    <property type="entry name" value="UDP-Glc/GDP-Man_DH_C"/>
</dbReference>
<dbReference type="InterPro" id="IPR036220">
    <property type="entry name" value="UDP-Glc/GDP-Man_DH_C_sf"/>
</dbReference>
<dbReference type="InterPro" id="IPR014026">
    <property type="entry name" value="UDP-Glc/GDP-Man_DH_dimer"/>
</dbReference>
<dbReference type="InterPro" id="IPR001732">
    <property type="entry name" value="UDP-Glc/GDP-Man_DH_N"/>
</dbReference>
<dbReference type="InterPro" id="IPR028357">
    <property type="entry name" value="UDPglc_DH_bac"/>
</dbReference>
<dbReference type="NCBIfam" id="TIGR03026">
    <property type="entry name" value="NDP-sugDHase"/>
    <property type="match status" value="1"/>
</dbReference>
<dbReference type="PANTHER" id="PTHR43750">
    <property type="entry name" value="UDP-GLUCOSE 6-DEHYDROGENASE TUAD"/>
    <property type="match status" value="1"/>
</dbReference>
<dbReference type="PANTHER" id="PTHR43750:SF3">
    <property type="entry name" value="UDP-GLUCOSE 6-DEHYDROGENASE TUAD"/>
    <property type="match status" value="1"/>
</dbReference>
<dbReference type="Pfam" id="PF00984">
    <property type="entry name" value="UDPG_MGDP_dh"/>
    <property type="match status" value="1"/>
</dbReference>
<dbReference type="Pfam" id="PF03720">
    <property type="entry name" value="UDPG_MGDP_dh_C"/>
    <property type="match status" value="1"/>
</dbReference>
<dbReference type="Pfam" id="PF03721">
    <property type="entry name" value="UDPG_MGDP_dh_N"/>
    <property type="match status" value="1"/>
</dbReference>
<dbReference type="PIRSF" id="PIRSF500134">
    <property type="entry name" value="UDPglc_DH_bac"/>
    <property type="match status" value="1"/>
</dbReference>
<dbReference type="PIRSF" id="PIRSF000124">
    <property type="entry name" value="UDPglc_GDPman_dh"/>
    <property type="match status" value="1"/>
</dbReference>
<dbReference type="SMART" id="SM00984">
    <property type="entry name" value="UDPG_MGDP_dh_C"/>
    <property type="match status" value="1"/>
</dbReference>
<dbReference type="SUPFAM" id="SSF48179">
    <property type="entry name" value="6-phosphogluconate dehydrogenase C-terminal domain-like"/>
    <property type="match status" value="1"/>
</dbReference>
<dbReference type="SUPFAM" id="SSF51735">
    <property type="entry name" value="NAD(P)-binding Rossmann-fold domains"/>
    <property type="match status" value="1"/>
</dbReference>
<dbReference type="SUPFAM" id="SSF52413">
    <property type="entry name" value="UDP-glucose/GDP-mannose dehydrogenase C-terminal domain"/>
    <property type="match status" value="1"/>
</dbReference>
<sequence>MNITFIGSGYVGLVSGIIMGYLGHNVTCLDNDEVKISKLNKQILPIYEAKLDEYLKQALEANRLKFTNIYNNELQNAEAIFITVGTPSKESGEADLKYVYDAIDKVSEHINKDCLIVIKSTVPPDSCSNIIAYLKSKGFSFNVASNPEFLREGSAVEDFLYPDRIVVGVNNKESEEILRKIYAPLIEQGAKFVVTDLVTSELIKYASNSFLATKIAFINEMADLCEKIGGNIEDLSKGVGLDQRIGQNFLNAGPGFGGSCFPKDILALNNLVENHHIDCKILKAVIKSNKQRPSNMVDKIATLLDGDLKGKNIAVLGLTYKAGTDDVRASPAIEIVKILLNKDVYVKAFDPIGLENAKKNLEHKNLLYLDSVAEACKSVDIIVIATEWLEFKELNWQGIYDLVKFPIVIDLRNIIDNEAMKKIGFRYYAVGSKLDVIPAKAGIHYKAR</sequence>